<sequence length="194" mass="21397">MQSQYPSAHAPTADEAMLWNREALPPGPGQEAVLRGITGEMADKGFVVANLDKLVNWARTGSLWPMTFGLACCAVEMIHAYMPRYDLDRFGVIPRASPRQSDVMIVAGTLTNKMAPALRRVYDQMPEPRWVISMGSCANGGGYYHYSYSVVRGCDRIVPVDVYVPGCPPTAEALVYGIMQLQKKIRRTGTILRG</sequence>
<name>NUOB_GRABC</name>
<organism>
    <name type="scientific">Granulibacter bethesdensis (strain ATCC BAA-1260 / CGDNIH1)</name>
    <dbReference type="NCBI Taxonomy" id="391165"/>
    <lineage>
        <taxon>Bacteria</taxon>
        <taxon>Pseudomonadati</taxon>
        <taxon>Pseudomonadota</taxon>
        <taxon>Alphaproteobacteria</taxon>
        <taxon>Acetobacterales</taxon>
        <taxon>Acetobacteraceae</taxon>
        <taxon>Granulibacter</taxon>
    </lineage>
</organism>
<reference key="1">
    <citation type="journal article" date="2007" name="J. Bacteriol.">
        <title>Genome sequence analysis of the emerging human pathogenic acetic acid bacterium Granulibacter bethesdensis.</title>
        <authorList>
            <person name="Greenberg D.E."/>
            <person name="Porcella S.F."/>
            <person name="Zelazny A.M."/>
            <person name="Virtaneva K."/>
            <person name="Sturdevant D.E."/>
            <person name="Kupko J.J. III"/>
            <person name="Barbian K.D."/>
            <person name="Babar A."/>
            <person name="Dorward D.W."/>
            <person name="Holland S.M."/>
        </authorList>
    </citation>
    <scope>NUCLEOTIDE SEQUENCE [LARGE SCALE GENOMIC DNA]</scope>
    <source>
        <strain>ATCC BAA-1260 / CGDNIH1</strain>
    </source>
</reference>
<accession>Q0BSK3</accession>
<keyword id="KW-0004">4Fe-4S</keyword>
<keyword id="KW-0997">Cell inner membrane</keyword>
<keyword id="KW-1003">Cell membrane</keyword>
<keyword id="KW-0408">Iron</keyword>
<keyword id="KW-0411">Iron-sulfur</keyword>
<keyword id="KW-0472">Membrane</keyword>
<keyword id="KW-0479">Metal-binding</keyword>
<keyword id="KW-0520">NAD</keyword>
<keyword id="KW-0874">Quinone</keyword>
<keyword id="KW-1185">Reference proteome</keyword>
<keyword id="KW-1278">Translocase</keyword>
<keyword id="KW-0813">Transport</keyword>
<keyword id="KW-0830">Ubiquinone</keyword>
<feature type="chain" id="PRO_0000358411" description="NADH-quinone oxidoreductase subunit B">
    <location>
        <begin position="1"/>
        <end position="194"/>
    </location>
</feature>
<feature type="binding site" evidence="2">
    <location>
        <position position="72"/>
    </location>
    <ligand>
        <name>[4Fe-4S] cluster</name>
        <dbReference type="ChEBI" id="CHEBI:49883"/>
    </ligand>
</feature>
<feature type="binding site" evidence="2">
    <location>
        <position position="73"/>
    </location>
    <ligand>
        <name>[4Fe-4S] cluster</name>
        <dbReference type="ChEBI" id="CHEBI:49883"/>
    </ligand>
</feature>
<feature type="binding site" evidence="2">
    <location>
        <position position="137"/>
    </location>
    <ligand>
        <name>[4Fe-4S] cluster</name>
        <dbReference type="ChEBI" id="CHEBI:49883"/>
    </ligand>
</feature>
<feature type="binding site" evidence="2">
    <location>
        <position position="167"/>
    </location>
    <ligand>
        <name>[4Fe-4S] cluster</name>
        <dbReference type="ChEBI" id="CHEBI:49883"/>
    </ligand>
</feature>
<gene>
    <name evidence="2" type="primary">nuoB</name>
    <name type="ordered locus">GbCGDNIH1_1301</name>
</gene>
<protein>
    <recommendedName>
        <fullName evidence="2">NADH-quinone oxidoreductase subunit B</fullName>
        <ecNumber evidence="2">7.1.1.-</ecNumber>
    </recommendedName>
    <alternativeName>
        <fullName evidence="2">NADH dehydrogenase I subunit B</fullName>
    </alternativeName>
    <alternativeName>
        <fullName evidence="2">NDH-1 subunit B</fullName>
    </alternativeName>
</protein>
<proteinExistence type="inferred from homology"/>
<evidence type="ECO:0000250" key="1"/>
<evidence type="ECO:0000255" key="2">
    <source>
        <dbReference type="HAMAP-Rule" id="MF_01356"/>
    </source>
</evidence>
<comment type="function">
    <text evidence="1">NDH-1 shuttles electrons from NADH, via FMN and iron-sulfur (Fe-S) centers, to quinones in the respiratory chain. Couples the redox reaction to proton translocation (for every two electrons transferred, four hydrogen ions are translocated across the cytoplasmic membrane), and thus conserves the redox energy in a proton gradient (By similarity).</text>
</comment>
<comment type="catalytic activity">
    <reaction evidence="2">
        <text>a quinone + NADH + 5 H(+)(in) = a quinol + NAD(+) + 4 H(+)(out)</text>
        <dbReference type="Rhea" id="RHEA:57888"/>
        <dbReference type="ChEBI" id="CHEBI:15378"/>
        <dbReference type="ChEBI" id="CHEBI:24646"/>
        <dbReference type="ChEBI" id="CHEBI:57540"/>
        <dbReference type="ChEBI" id="CHEBI:57945"/>
        <dbReference type="ChEBI" id="CHEBI:132124"/>
    </reaction>
</comment>
<comment type="cofactor">
    <cofactor evidence="2">
        <name>[4Fe-4S] cluster</name>
        <dbReference type="ChEBI" id="CHEBI:49883"/>
    </cofactor>
    <text evidence="2">Binds 1 [4Fe-4S] cluster.</text>
</comment>
<comment type="subunit">
    <text evidence="2">NDH-1 is composed of 14 different subunits. Subunits NuoB, C, D, E, F, and G constitute the peripheral sector of the complex.</text>
</comment>
<comment type="subcellular location">
    <subcellularLocation>
        <location evidence="2">Cell inner membrane</location>
        <topology evidence="2">Peripheral membrane protein</topology>
        <orientation evidence="2">Cytoplasmic side</orientation>
    </subcellularLocation>
</comment>
<comment type="similarity">
    <text evidence="2">Belongs to the complex I 20 kDa subunit family.</text>
</comment>
<dbReference type="EC" id="7.1.1.-" evidence="2"/>
<dbReference type="EMBL" id="CP000394">
    <property type="protein sequence ID" value="ABI62199.1"/>
    <property type="molecule type" value="Genomic_DNA"/>
</dbReference>
<dbReference type="RefSeq" id="WP_011632008.1">
    <property type="nucleotide sequence ID" value="NC_008343.2"/>
</dbReference>
<dbReference type="SMR" id="Q0BSK3"/>
<dbReference type="STRING" id="391165.GbCGDNIH1_1301"/>
<dbReference type="GeneID" id="69745540"/>
<dbReference type="KEGG" id="gbe:GbCGDNIH1_1301"/>
<dbReference type="eggNOG" id="COG0377">
    <property type="taxonomic scope" value="Bacteria"/>
</dbReference>
<dbReference type="HOGENOM" id="CLU_055737_7_0_5"/>
<dbReference type="OrthoDB" id="9786737at2"/>
<dbReference type="Proteomes" id="UP000001963">
    <property type="component" value="Chromosome"/>
</dbReference>
<dbReference type="GO" id="GO:0005886">
    <property type="term" value="C:plasma membrane"/>
    <property type="evidence" value="ECO:0007669"/>
    <property type="project" value="UniProtKB-SubCell"/>
</dbReference>
<dbReference type="GO" id="GO:0045271">
    <property type="term" value="C:respiratory chain complex I"/>
    <property type="evidence" value="ECO:0007669"/>
    <property type="project" value="TreeGrafter"/>
</dbReference>
<dbReference type="GO" id="GO:0051539">
    <property type="term" value="F:4 iron, 4 sulfur cluster binding"/>
    <property type="evidence" value="ECO:0007669"/>
    <property type="project" value="UniProtKB-KW"/>
</dbReference>
<dbReference type="GO" id="GO:0005506">
    <property type="term" value="F:iron ion binding"/>
    <property type="evidence" value="ECO:0007669"/>
    <property type="project" value="UniProtKB-UniRule"/>
</dbReference>
<dbReference type="GO" id="GO:0008137">
    <property type="term" value="F:NADH dehydrogenase (ubiquinone) activity"/>
    <property type="evidence" value="ECO:0007669"/>
    <property type="project" value="InterPro"/>
</dbReference>
<dbReference type="GO" id="GO:0050136">
    <property type="term" value="F:NADH:ubiquinone reductase (non-electrogenic) activity"/>
    <property type="evidence" value="ECO:0007669"/>
    <property type="project" value="UniProtKB-UniRule"/>
</dbReference>
<dbReference type="GO" id="GO:0048038">
    <property type="term" value="F:quinone binding"/>
    <property type="evidence" value="ECO:0007669"/>
    <property type="project" value="UniProtKB-KW"/>
</dbReference>
<dbReference type="GO" id="GO:0009060">
    <property type="term" value="P:aerobic respiration"/>
    <property type="evidence" value="ECO:0007669"/>
    <property type="project" value="TreeGrafter"/>
</dbReference>
<dbReference type="GO" id="GO:0015990">
    <property type="term" value="P:electron transport coupled proton transport"/>
    <property type="evidence" value="ECO:0007669"/>
    <property type="project" value="TreeGrafter"/>
</dbReference>
<dbReference type="FunFam" id="3.40.50.12280:FF:000001">
    <property type="entry name" value="NADH-quinone oxidoreductase subunit B 2"/>
    <property type="match status" value="1"/>
</dbReference>
<dbReference type="Gene3D" id="3.40.50.12280">
    <property type="match status" value="1"/>
</dbReference>
<dbReference type="HAMAP" id="MF_01356">
    <property type="entry name" value="NDH1_NuoB"/>
    <property type="match status" value="1"/>
</dbReference>
<dbReference type="InterPro" id="IPR006137">
    <property type="entry name" value="NADH_UbQ_OxRdtase-like_20kDa"/>
</dbReference>
<dbReference type="InterPro" id="IPR006138">
    <property type="entry name" value="NADH_UQ_OxRdtase_20Kd_su"/>
</dbReference>
<dbReference type="NCBIfam" id="TIGR01957">
    <property type="entry name" value="nuoB_fam"/>
    <property type="match status" value="1"/>
</dbReference>
<dbReference type="NCBIfam" id="NF005012">
    <property type="entry name" value="PRK06411.1"/>
    <property type="match status" value="1"/>
</dbReference>
<dbReference type="PANTHER" id="PTHR11995">
    <property type="entry name" value="NADH DEHYDROGENASE"/>
    <property type="match status" value="1"/>
</dbReference>
<dbReference type="PANTHER" id="PTHR11995:SF14">
    <property type="entry name" value="NADH DEHYDROGENASE [UBIQUINONE] IRON-SULFUR PROTEIN 7, MITOCHONDRIAL"/>
    <property type="match status" value="1"/>
</dbReference>
<dbReference type="Pfam" id="PF01058">
    <property type="entry name" value="Oxidored_q6"/>
    <property type="match status" value="1"/>
</dbReference>
<dbReference type="SUPFAM" id="SSF56770">
    <property type="entry name" value="HydA/Nqo6-like"/>
    <property type="match status" value="1"/>
</dbReference>
<dbReference type="PROSITE" id="PS01150">
    <property type="entry name" value="COMPLEX1_20K"/>
    <property type="match status" value="1"/>
</dbReference>